<reference key="1">
    <citation type="submission" date="2007-06" db="EMBL/GenBank/DDBJ databases">
        <authorList>
            <consortium name="NIH - Mammalian Gene Collection (MGC) project"/>
        </authorList>
    </citation>
    <scope>NUCLEOTIDE SEQUENCE [LARGE SCALE MRNA]</scope>
    <source>
        <strain>Hereford</strain>
        <tissue>Ascending colon</tissue>
    </source>
</reference>
<organism>
    <name type="scientific">Bos taurus</name>
    <name type="common">Bovine</name>
    <dbReference type="NCBI Taxonomy" id="9913"/>
    <lineage>
        <taxon>Eukaryota</taxon>
        <taxon>Metazoa</taxon>
        <taxon>Chordata</taxon>
        <taxon>Craniata</taxon>
        <taxon>Vertebrata</taxon>
        <taxon>Euteleostomi</taxon>
        <taxon>Mammalia</taxon>
        <taxon>Eutheria</taxon>
        <taxon>Laurasiatheria</taxon>
        <taxon>Artiodactyla</taxon>
        <taxon>Ruminantia</taxon>
        <taxon>Pecora</taxon>
        <taxon>Bovidae</taxon>
        <taxon>Bovinae</taxon>
        <taxon>Bos</taxon>
    </lineage>
</organism>
<proteinExistence type="evidence at transcript level"/>
<evidence type="ECO:0000250" key="1"/>
<evidence type="ECO:0000305" key="2"/>
<comment type="function">
    <text evidence="1">May play a role in vesicular transport from endoplasmic reticulum to Golgi.</text>
</comment>
<comment type="subunit">
    <text evidence="1">Component of the multisubunit TRAPP (transport protein particle) complex, which includes at least TRAPPC2, TRAPPC2L, TRAPPC3, TRAPPC3L, TRAPPC4, TRAPPC5, TRAPPC8, TRAPPC9, TRAPPC10, TRAPPC11 and TRAPPC12. Interacts with the heterodimer TRAPPC3-TRAPPC6A (By similarity).</text>
</comment>
<comment type="subcellular location">
    <subcellularLocation>
        <location evidence="1">Cytoplasm</location>
        <location evidence="1">Perinuclear region</location>
    </subcellularLocation>
    <subcellularLocation>
        <location evidence="1">Endoplasmic reticulum</location>
    </subcellularLocation>
    <subcellularLocation>
        <location evidence="1">Golgi apparatus</location>
    </subcellularLocation>
</comment>
<comment type="similarity">
    <text evidence="2">Belongs to the TRAPP small subunits family. Sedlin subfamily.</text>
</comment>
<name>TPC2L_BOVIN</name>
<dbReference type="EMBL" id="BC146228">
    <property type="protein sequence ID" value="AAI46229.1"/>
    <property type="molecule type" value="mRNA"/>
</dbReference>
<dbReference type="RefSeq" id="NP_001092390.1">
    <property type="nucleotide sequence ID" value="NM_001098920.1"/>
</dbReference>
<dbReference type="SMR" id="A6H7F7"/>
<dbReference type="FunCoup" id="A6H7F7">
    <property type="interactions" value="2311"/>
</dbReference>
<dbReference type="STRING" id="9913.ENSBTAP00000025533"/>
<dbReference type="PaxDb" id="9913-ENSBTAP00000025533"/>
<dbReference type="Ensembl" id="ENSBTAT00000025533.6">
    <property type="protein sequence ID" value="ENSBTAP00000025533.6"/>
    <property type="gene ID" value="ENSBTAG00000019184.7"/>
</dbReference>
<dbReference type="GeneID" id="509955"/>
<dbReference type="KEGG" id="bta:509955"/>
<dbReference type="CTD" id="51693"/>
<dbReference type="VEuPathDB" id="HostDB:ENSBTAG00000019184"/>
<dbReference type="VGNC" id="VGNC:36287">
    <property type="gene designation" value="TRAPPC2L"/>
</dbReference>
<dbReference type="eggNOG" id="KOG3444">
    <property type="taxonomic scope" value="Eukaryota"/>
</dbReference>
<dbReference type="GeneTree" id="ENSGT00510000047505"/>
<dbReference type="InParanoid" id="A6H7F7"/>
<dbReference type="OMA" id="QNPFYEP"/>
<dbReference type="OrthoDB" id="10258445at2759"/>
<dbReference type="Reactome" id="R-BTA-204005">
    <property type="pathway name" value="COPII-mediated vesicle transport"/>
</dbReference>
<dbReference type="Reactome" id="R-BTA-8876198">
    <property type="pathway name" value="RAB GEFs exchange GTP for GDP on RABs"/>
</dbReference>
<dbReference type="Proteomes" id="UP000009136">
    <property type="component" value="Chromosome 18"/>
</dbReference>
<dbReference type="Bgee" id="ENSBTAG00000019184">
    <property type="expression patterns" value="Expressed in retina and 103 other cell types or tissues"/>
</dbReference>
<dbReference type="GO" id="GO:0005737">
    <property type="term" value="C:cytoplasm"/>
    <property type="evidence" value="ECO:0000318"/>
    <property type="project" value="GO_Central"/>
</dbReference>
<dbReference type="GO" id="GO:0005783">
    <property type="term" value="C:endoplasmic reticulum"/>
    <property type="evidence" value="ECO:0007669"/>
    <property type="project" value="UniProtKB-SubCell"/>
</dbReference>
<dbReference type="GO" id="GO:0005794">
    <property type="term" value="C:Golgi apparatus"/>
    <property type="evidence" value="ECO:0007669"/>
    <property type="project" value="UniProtKB-SubCell"/>
</dbReference>
<dbReference type="GO" id="GO:0005634">
    <property type="term" value="C:nucleus"/>
    <property type="evidence" value="ECO:0000318"/>
    <property type="project" value="GO_Central"/>
</dbReference>
<dbReference type="GO" id="GO:0048471">
    <property type="term" value="C:perinuclear region of cytoplasm"/>
    <property type="evidence" value="ECO:0007669"/>
    <property type="project" value="UniProtKB-SubCell"/>
</dbReference>
<dbReference type="GO" id="GO:0030008">
    <property type="term" value="C:TRAPP complex"/>
    <property type="evidence" value="ECO:0000318"/>
    <property type="project" value="GO_Central"/>
</dbReference>
<dbReference type="GO" id="GO:0006888">
    <property type="term" value="P:endoplasmic reticulum to Golgi vesicle-mediated transport"/>
    <property type="evidence" value="ECO:0000318"/>
    <property type="project" value="GO_Central"/>
</dbReference>
<dbReference type="CDD" id="cd14854">
    <property type="entry name" value="TRAPPC2L"/>
    <property type="match status" value="1"/>
</dbReference>
<dbReference type="FunFam" id="3.30.450.70:FF:000005">
    <property type="entry name" value="Trafficking protein particle complex subunit 2-like protein"/>
    <property type="match status" value="1"/>
</dbReference>
<dbReference type="Gene3D" id="3.30.450.70">
    <property type="match status" value="1"/>
</dbReference>
<dbReference type="InterPro" id="IPR011012">
    <property type="entry name" value="Longin-like_dom_sf"/>
</dbReference>
<dbReference type="InterPro" id="IPR006722">
    <property type="entry name" value="Sedlin"/>
</dbReference>
<dbReference type="InterPro" id="IPR044760">
    <property type="entry name" value="TRAPPC2L"/>
</dbReference>
<dbReference type="PANTHER" id="PTHR12403">
    <property type="entry name" value="TRAFFICKING PROTEIN PARTICLE COMPLEX SUBUNIT 2"/>
    <property type="match status" value="1"/>
</dbReference>
<dbReference type="Pfam" id="PF04628">
    <property type="entry name" value="Sedlin_N"/>
    <property type="match status" value="1"/>
</dbReference>
<dbReference type="SUPFAM" id="SSF64356">
    <property type="entry name" value="SNARE-like"/>
    <property type="match status" value="1"/>
</dbReference>
<protein>
    <recommendedName>
        <fullName>Trafficking protein particle complex subunit 2-like protein</fullName>
    </recommendedName>
</protein>
<accession>A6H7F7</accession>
<sequence>MAVCVAVIAKENYPLYIRSIPTENELKFHYMVHTSLDVVDEKISAMGKALVDQRELYLGLLYPTEDYKVYGYVTNSKVKFVMVVDSSNTALRDNEIRSMFRKLHNSYTDVMCNPFYNPGDRIQSRAFDGMVTSMMIQVC</sequence>
<feature type="chain" id="PRO_0000326629" description="Trafficking protein particle complex subunit 2-like protein">
    <location>
        <begin position="1"/>
        <end position="139"/>
    </location>
</feature>
<gene>
    <name type="primary">TRAPPC2L</name>
</gene>
<keyword id="KW-0963">Cytoplasm</keyword>
<keyword id="KW-0256">Endoplasmic reticulum</keyword>
<keyword id="KW-0931">ER-Golgi transport</keyword>
<keyword id="KW-0333">Golgi apparatus</keyword>
<keyword id="KW-1185">Reference proteome</keyword>
<keyword id="KW-0813">Transport</keyword>